<evidence type="ECO:0000250" key="1">
    <source>
        <dbReference type="UniProtKB" id="P0DX54"/>
    </source>
</evidence>
<evidence type="ECO:0000250" key="2">
    <source>
        <dbReference type="UniProtKB" id="P24173"/>
    </source>
</evidence>
<evidence type="ECO:0000269" key="3">
    <source>
    </source>
</evidence>
<evidence type="ECO:0000303" key="4">
    <source>
    </source>
</evidence>
<evidence type="ECO:0000305" key="5"/>
<organism>
    <name type="scientific">Campylobacter coli</name>
    <dbReference type="NCBI Taxonomy" id="195"/>
    <lineage>
        <taxon>Bacteria</taxon>
        <taxon>Pseudomonadati</taxon>
        <taxon>Campylobacterota</taxon>
        <taxon>Epsilonproteobacteria</taxon>
        <taxon>Campylobacterales</taxon>
        <taxon>Campylobacteraceae</taxon>
        <taxon>Campylobacter</taxon>
    </lineage>
</organism>
<proteinExistence type="inferred from homology"/>
<feature type="chain" id="PRO_0000459130" description="Lipopolysaccharide heptosyltransferase 1">
    <location>
        <begin position="1"/>
        <end position="342"/>
    </location>
</feature>
<feature type="binding site" evidence="1">
    <location>
        <position position="188"/>
    </location>
    <ligand>
        <name>ADP-L-glycero-beta-D-manno-heptose</name>
        <dbReference type="ChEBI" id="CHEBI:61506"/>
    </ligand>
</feature>
<feature type="binding site" evidence="1">
    <location>
        <position position="189"/>
    </location>
    <ligand>
        <name>ADP-L-glycero-beta-D-manno-heptose</name>
        <dbReference type="ChEBI" id="CHEBI:61506"/>
    </ligand>
</feature>
<feature type="binding site" evidence="1">
    <location>
        <position position="193"/>
    </location>
    <ligand>
        <name>ADP-L-glycero-beta-D-manno-heptose</name>
        <dbReference type="ChEBI" id="CHEBI:61506"/>
    </ligand>
</feature>
<feature type="binding site" evidence="1">
    <location>
        <position position="225"/>
    </location>
    <ligand>
        <name>ADP-L-glycero-beta-D-manno-heptose</name>
        <dbReference type="ChEBI" id="CHEBI:61506"/>
    </ligand>
</feature>
<feature type="binding site" evidence="1">
    <location>
        <position position="268"/>
    </location>
    <ligand>
        <name>ADP-L-glycero-beta-D-manno-heptose</name>
        <dbReference type="ChEBI" id="CHEBI:61506"/>
    </ligand>
</feature>
<feature type="binding site" evidence="1">
    <location>
        <position position="269"/>
    </location>
    <ligand>
        <name>ADP-L-glycero-beta-D-manno-heptose</name>
        <dbReference type="ChEBI" id="CHEBI:61506"/>
    </ligand>
</feature>
<feature type="binding site" evidence="1">
    <location>
        <position position="270"/>
    </location>
    <ligand>
        <name>ADP-L-glycero-beta-D-manno-heptose</name>
        <dbReference type="ChEBI" id="CHEBI:61506"/>
    </ligand>
</feature>
<feature type="binding site" evidence="1">
    <location>
        <position position="273"/>
    </location>
    <ligand>
        <name>ADP-L-glycero-beta-D-manno-heptose</name>
        <dbReference type="ChEBI" id="CHEBI:61506"/>
    </ligand>
</feature>
<comment type="function">
    <text evidence="2 3">Glycosyltransferase involved in the biosynthesis of the core oligosaccharide region of lipopolysaccharide (LPS) (PubMed:9831648). Catalyzes the addition of the first heptose unit to one 3-deoxy-D-manno-octulosonic acid (Kdo) residue of the Kdo2-lipid A module (By similarity).</text>
</comment>
<comment type="catalytic activity">
    <reaction evidence="2">
        <text>an alpha-Kdo-(2-&gt;4)-alpha-Kdo-(2-&gt;6)-lipid A + ADP-L-glycero-beta-D-manno-heptose = an L-alpha-D-Hep-(1-&gt;5)-[alpha-Kdo-(2-&gt;4)]-alpha-Kdo-(2-&gt;6)-lipid A + ADP + H(+)</text>
        <dbReference type="Rhea" id="RHEA:74067"/>
        <dbReference type="ChEBI" id="CHEBI:15378"/>
        <dbReference type="ChEBI" id="CHEBI:61506"/>
        <dbReference type="ChEBI" id="CHEBI:176431"/>
        <dbReference type="ChEBI" id="CHEBI:193068"/>
        <dbReference type="ChEBI" id="CHEBI:456216"/>
        <dbReference type="EC" id="2.4.99.23"/>
    </reaction>
</comment>
<comment type="pathway">
    <text evidence="2">Bacterial outer membrane biogenesis; LPS core biosynthesis.</text>
</comment>
<comment type="subcellular location">
    <subcellularLocation>
        <location evidence="2">Cell inner membrane</location>
        <topology evidence="2">Peripheral membrane protein</topology>
        <orientation evidence="2">Cytoplasmic side</orientation>
    </subcellularLocation>
</comment>
<comment type="miscellaneous">
    <text evidence="3">Can complement a S.typhimurium mutant lacking this gene.</text>
</comment>
<comment type="similarity">
    <text evidence="5">Belongs to the glycosyltransferase 9 family.</text>
</comment>
<accession>O87333</accession>
<dbReference type="EC" id="2.4.99.23" evidence="2"/>
<dbReference type="EMBL" id="AF043546">
    <property type="protein sequence ID" value="AAD05204.1"/>
    <property type="molecule type" value="Genomic_DNA"/>
</dbReference>
<dbReference type="SMR" id="O87333"/>
<dbReference type="CAZy" id="GT9">
    <property type="family name" value="Glycosyltransferase Family 9"/>
</dbReference>
<dbReference type="UniPathway" id="UPA00958"/>
<dbReference type="GO" id="GO:0005829">
    <property type="term" value="C:cytosol"/>
    <property type="evidence" value="ECO:0007669"/>
    <property type="project" value="TreeGrafter"/>
</dbReference>
<dbReference type="GO" id="GO:0005886">
    <property type="term" value="C:plasma membrane"/>
    <property type="evidence" value="ECO:0007669"/>
    <property type="project" value="UniProtKB-SubCell"/>
</dbReference>
<dbReference type="GO" id="GO:0008713">
    <property type="term" value="F:ADP-heptose-lipopolysaccharide heptosyltransferase activity"/>
    <property type="evidence" value="ECO:0007669"/>
    <property type="project" value="TreeGrafter"/>
</dbReference>
<dbReference type="GO" id="GO:0009244">
    <property type="term" value="P:lipopolysaccharide core region biosynthetic process"/>
    <property type="evidence" value="ECO:0007669"/>
    <property type="project" value="UniProtKB-UniPathway"/>
</dbReference>
<dbReference type="CDD" id="cd03789">
    <property type="entry name" value="GT9_LPS_heptosyltransferase"/>
    <property type="match status" value="1"/>
</dbReference>
<dbReference type="Gene3D" id="3.40.50.2000">
    <property type="entry name" value="Glycogen Phosphorylase B"/>
    <property type="match status" value="2"/>
</dbReference>
<dbReference type="InterPro" id="IPR002201">
    <property type="entry name" value="Glyco_trans_9"/>
</dbReference>
<dbReference type="InterPro" id="IPR011908">
    <property type="entry name" value="LipoPS_heptosylTferase-I"/>
</dbReference>
<dbReference type="InterPro" id="IPR051199">
    <property type="entry name" value="LPS_LOS_Heptosyltrfase"/>
</dbReference>
<dbReference type="NCBIfam" id="TIGR02193">
    <property type="entry name" value="heptsyl_trn_I"/>
    <property type="match status" value="1"/>
</dbReference>
<dbReference type="PANTHER" id="PTHR30160:SF19">
    <property type="entry name" value="LIPOPOLYSACCHARIDE HEPTOSYLTRANSFERASE 1"/>
    <property type="match status" value="1"/>
</dbReference>
<dbReference type="PANTHER" id="PTHR30160">
    <property type="entry name" value="TETRAACYLDISACCHARIDE 4'-KINASE-RELATED"/>
    <property type="match status" value="1"/>
</dbReference>
<dbReference type="Pfam" id="PF01075">
    <property type="entry name" value="Glyco_transf_9"/>
    <property type="match status" value="1"/>
</dbReference>
<dbReference type="SUPFAM" id="SSF53756">
    <property type="entry name" value="UDP-Glycosyltransferase/glycogen phosphorylase"/>
    <property type="match status" value="1"/>
</dbReference>
<reference key="1">
    <citation type="journal article" date="1998" name="Gene">
        <title>Cloning, sequencing, and characterization of the lipopolysaccharide biosynthetic enzyme heptosyltransferase I gene (waaC) from Campylobacter jejuni and Campylobacter coli.</title>
        <authorList>
            <person name="Klena J.D."/>
            <person name="Gray S.A."/>
            <person name="Konkel M.E."/>
        </authorList>
    </citation>
    <scope>NUCLEOTIDE SEQUENCE [GENOMIC DNA]</scope>
    <scope>FUNCTION</scope>
    <source>
        <strain>M275</strain>
    </source>
</reference>
<keyword id="KW-0997">Cell inner membrane</keyword>
<keyword id="KW-1003">Cell membrane</keyword>
<keyword id="KW-0328">Glycosyltransferase</keyword>
<keyword id="KW-0448">Lipopolysaccharide biosynthesis</keyword>
<keyword id="KW-0472">Membrane</keyword>
<keyword id="KW-0808">Transferase</keyword>
<protein>
    <recommendedName>
        <fullName evidence="5">Lipopolysaccharide heptosyltransferase 1</fullName>
        <ecNumber evidence="2">2.4.99.23</ecNumber>
    </recommendedName>
    <alternativeName>
        <fullName evidence="2">ADP-heptose:lipopolysaccharide heptosyltransferase I</fullName>
        <shortName evidence="2">ADP-heptose:LPS heptosyltransferase I</shortName>
        <shortName evidence="4">Heptosyltransferase I</shortName>
    </alternativeName>
</protein>
<gene>
    <name evidence="4" type="primary">waaC</name>
</gene>
<sequence length="342" mass="39317">MKIAIIRLSALGDIIQSAVVLQFIKKFKKDIEIHWFVDEKFEGILKNHPLIDKLYALPLKDKKIIQSLRILLEARKNNYNAVMDLQGLVKSAIVSRILSRNNFGFDKNSLKESFAHNFYNQKLNIDYNENVFVRYLGLTSFMLNKYFDPKDLAFKEDVFSVDEKLKQLLSEKMQLTKNKKNILIHVGSSEENKIYPKTKLALLCKLIIKEFPEIKIFLGWGNLKEYEFAKEVIELGAISQDNIEIAPKFSLEELIVFAKSMDLIIGNDSGPTHLAFALNRPSITIFGATPSYRNAFKTNINKIIDTGKKITNTKHLDKSDFCISTIEEEDILKLVKELFGDE</sequence>
<name>WAAC_CAMCO</name>